<accession>B5XX25</accession>
<keyword id="KW-0479">Metal-binding</keyword>
<keyword id="KW-0520">NAD</keyword>
<keyword id="KW-0560">Oxidoreductase</keyword>
<comment type="catalytic activity">
    <reaction evidence="1">
        <text>(S)-malate + NAD(+) = pyruvate + CO2 + NADH</text>
        <dbReference type="Rhea" id="RHEA:12653"/>
        <dbReference type="ChEBI" id="CHEBI:15361"/>
        <dbReference type="ChEBI" id="CHEBI:15589"/>
        <dbReference type="ChEBI" id="CHEBI:16526"/>
        <dbReference type="ChEBI" id="CHEBI:57540"/>
        <dbReference type="ChEBI" id="CHEBI:57945"/>
        <dbReference type="EC" id="1.1.1.38"/>
    </reaction>
</comment>
<comment type="catalytic activity">
    <reaction evidence="1">
        <text>oxaloacetate + H(+) = pyruvate + CO2</text>
        <dbReference type="Rhea" id="RHEA:15641"/>
        <dbReference type="ChEBI" id="CHEBI:15361"/>
        <dbReference type="ChEBI" id="CHEBI:15378"/>
        <dbReference type="ChEBI" id="CHEBI:16452"/>
        <dbReference type="ChEBI" id="CHEBI:16526"/>
        <dbReference type="EC" id="1.1.1.38"/>
    </reaction>
</comment>
<comment type="cofactor">
    <cofactor evidence="1">
        <name>Mg(2+)</name>
        <dbReference type="ChEBI" id="CHEBI:18420"/>
    </cofactor>
    <cofactor evidence="1">
        <name>Mn(2+)</name>
        <dbReference type="ChEBI" id="CHEBI:29035"/>
    </cofactor>
    <text evidence="1">Divalent metal cations. Prefers magnesium or manganese.</text>
</comment>
<comment type="subunit">
    <text evidence="1">Homotetramer.</text>
</comment>
<comment type="similarity">
    <text evidence="1">Belongs to the malic enzymes family.</text>
</comment>
<dbReference type="EC" id="1.1.1.38" evidence="1"/>
<dbReference type="EMBL" id="CP000964">
    <property type="protein sequence ID" value="ACI11794.1"/>
    <property type="molecule type" value="Genomic_DNA"/>
</dbReference>
<dbReference type="SMR" id="B5XX25"/>
<dbReference type="KEGG" id="kpe:KPK_2508"/>
<dbReference type="HOGENOM" id="CLU_011405_5_2_6"/>
<dbReference type="Proteomes" id="UP000001734">
    <property type="component" value="Chromosome"/>
</dbReference>
<dbReference type="GO" id="GO:0005829">
    <property type="term" value="C:cytosol"/>
    <property type="evidence" value="ECO:0007669"/>
    <property type="project" value="TreeGrafter"/>
</dbReference>
<dbReference type="GO" id="GO:0004471">
    <property type="term" value="F:malate dehydrogenase (decarboxylating) (NAD+) activity"/>
    <property type="evidence" value="ECO:0007669"/>
    <property type="project" value="UniProtKB-UniRule"/>
</dbReference>
<dbReference type="GO" id="GO:0046872">
    <property type="term" value="F:metal ion binding"/>
    <property type="evidence" value="ECO:0007669"/>
    <property type="project" value="UniProtKB-KW"/>
</dbReference>
<dbReference type="GO" id="GO:0051287">
    <property type="term" value="F:NAD binding"/>
    <property type="evidence" value="ECO:0007669"/>
    <property type="project" value="InterPro"/>
</dbReference>
<dbReference type="GO" id="GO:0008948">
    <property type="term" value="F:oxaloacetate decarboxylase activity"/>
    <property type="evidence" value="ECO:0007669"/>
    <property type="project" value="UniProtKB-UniRule"/>
</dbReference>
<dbReference type="GO" id="GO:0006108">
    <property type="term" value="P:malate metabolic process"/>
    <property type="evidence" value="ECO:0007669"/>
    <property type="project" value="TreeGrafter"/>
</dbReference>
<dbReference type="CDD" id="cd05312">
    <property type="entry name" value="NAD_bind_1_malic_enz"/>
    <property type="match status" value="1"/>
</dbReference>
<dbReference type="FunFam" id="3.40.50.10380:FF:000001">
    <property type="entry name" value="NAD-dependent malic enzyme"/>
    <property type="match status" value="1"/>
</dbReference>
<dbReference type="FunFam" id="3.40.50.720:FF:000055">
    <property type="entry name" value="NAD-dependent malic enzyme"/>
    <property type="match status" value="1"/>
</dbReference>
<dbReference type="Gene3D" id="3.40.50.10380">
    <property type="entry name" value="Malic enzyme, N-terminal domain"/>
    <property type="match status" value="1"/>
</dbReference>
<dbReference type="Gene3D" id="3.40.50.720">
    <property type="entry name" value="NAD(P)-binding Rossmann-like Domain"/>
    <property type="match status" value="1"/>
</dbReference>
<dbReference type="HAMAP" id="MF_01619">
    <property type="entry name" value="NAD_malic_enz"/>
    <property type="match status" value="1"/>
</dbReference>
<dbReference type="InterPro" id="IPR046346">
    <property type="entry name" value="Aminoacid_DH-like_N_sf"/>
</dbReference>
<dbReference type="InterPro" id="IPR015884">
    <property type="entry name" value="Malic_enzyme_CS"/>
</dbReference>
<dbReference type="InterPro" id="IPR012301">
    <property type="entry name" value="Malic_N_dom"/>
</dbReference>
<dbReference type="InterPro" id="IPR037062">
    <property type="entry name" value="Malic_N_dom_sf"/>
</dbReference>
<dbReference type="InterPro" id="IPR012302">
    <property type="entry name" value="Malic_NAD-bd"/>
</dbReference>
<dbReference type="InterPro" id="IPR001891">
    <property type="entry name" value="Malic_OxRdtase"/>
</dbReference>
<dbReference type="InterPro" id="IPR036291">
    <property type="entry name" value="NAD(P)-bd_dom_sf"/>
</dbReference>
<dbReference type="InterPro" id="IPR023667">
    <property type="entry name" value="NAD_malic_enz_proteobac"/>
</dbReference>
<dbReference type="NCBIfam" id="NF010052">
    <property type="entry name" value="PRK13529.1"/>
    <property type="match status" value="1"/>
</dbReference>
<dbReference type="PANTHER" id="PTHR23406">
    <property type="entry name" value="MALIC ENZYME-RELATED"/>
    <property type="match status" value="1"/>
</dbReference>
<dbReference type="PANTHER" id="PTHR23406:SF34">
    <property type="entry name" value="NAD-DEPENDENT MALIC ENZYME, MITOCHONDRIAL"/>
    <property type="match status" value="1"/>
</dbReference>
<dbReference type="Pfam" id="PF00390">
    <property type="entry name" value="malic"/>
    <property type="match status" value="1"/>
</dbReference>
<dbReference type="Pfam" id="PF03949">
    <property type="entry name" value="Malic_M"/>
    <property type="match status" value="1"/>
</dbReference>
<dbReference type="PIRSF" id="PIRSF000106">
    <property type="entry name" value="ME"/>
    <property type="match status" value="1"/>
</dbReference>
<dbReference type="PRINTS" id="PR00072">
    <property type="entry name" value="MALOXRDTASE"/>
</dbReference>
<dbReference type="SMART" id="SM01274">
    <property type="entry name" value="malic"/>
    <property type="match status" value="1"/>
</dbReference>
<dbReference type="SMART" id="SM00919">
    <property type="entry name" value="Malic_M"/>
    <property type="match status" value="1"/>
</dbReference>
<dbReference type="SUPFAM" id="SSF53223">
    <property type="entry name" value="Aminoacid dehydrogenase-like, N-terminal domain"/>
    <property type="match status" value="1"/>
</dbReference>
<dbReference type="SUPFAM" id="SSF51735">
    <property type="entry name" value="NAD(P)-binding Rossmann-fold domains"/>
    <property type="match status" value="1"/>
</dbReference>
<dbReference type="PROSITE" id="PS00331">
    <property type="entry name" value="MALIC_ENZYMES"/>
    <property type="match status" value="1"/>
</dbReference>
<sequence>MQFTHKKNRSLYIPYAGPVLLEFPLLNKGSAFSLEERSNFNLLGLLPEVVETIEEQAERAWIQYQGFKTEIDKHIYLRNIQDTNETLFYRLIGNHLEEMMPVIYTPTVGAACERFSEIYRRARGVFISYQNRHNLDDILQNVPNHNVKVIVVTDGERILGLGDQGIGGMGIPIGKLSLYTTCGGISPAYTLPIVLDVGTNNQQLLDDPLYMGWRHPRITDDEYYQFVDDVIQAIKARWPDVLLQFEDFAQKNAMPLLNRYRNEICSFNDDIQGTAAVTVGTLIAASRGAGSQLSEQKIVFLGAGSAGCGIAEQIIAQIVREGVSEEEARQRVFMVDRFGLLTDGMPNLLPFQNKLVQKREHLQGWDTTNDVLSLLDVVRNVKPNILIGVSGQPGLFTEEIIREMHKHCPRPIVMPLSNPTSRVEATPQNILSWTDGEALVATGSPFAPVTLKGKQYAIAQCNNSYIFPGIGLGVIASGASRVTDEMLMAASETLAKHSPLVNNGEGPVLPELKDIQTVSRAIAFAVGKVAQEQGVAVKTSAEALLQAISDNFWLPEYRNYRRTSI</sequence>
<proteinExistence type="inferred from homology"/>
<organism>
    <name type="scientific">Klebsiella pneumoniae (strain 342)</name>
    <dbReference type="NCBI Taxonomy" id="507522"/>
    <lineage>
        <taxon>Bacteria</taxon>
        <taxon>Pseudomonadati</taxon>
        <taxon>Pseudomonadota</taxon>
        <taxon>Gammaproteobacteria</taxon>
        <taxon>Enterobacterales</taxon>
        <taxon>Enterobacteriaceae</taxon>
        <taxon>Klebsiella/Raoultella group</taxon>
        <taxon>Klebsiella</taxon>
        <taxon>Klebsiella pneumoniae complex</taxon>
    </lineage>
</organism>
<name>MAO1_KLEP3</name>
<protein>
    <recommendedName>
        <fullName evidence="1">NAD-dependent malic enzyme</fullName>
        <shortName evidence="1">NAD-ME</shortName>
        <ecNumber evidence="1">1.1.1.38</ecNumber>
    </recommendedName>
</protein>
<reference key="1">
    <citation type="journal article" date="2008" name="PLoS Genet.">
        <title>Complete genome sequence of the N2-fixing broad host range endophyte Klebsiella pneumoniae 342 and virulence predictions verified in mice.</title>
        <authorList>
            <person name="Fouts D.E."/>
            <person name="Tyler H.L."/>
            <person name="DeBoy R.T."/>
            <person name="Daugherty S."/>
            <person name="Ren Q."/>
            <person name="Badger J.H."/>
            <person name="Durkin A.S."/>
            <person name="Huot H."/>
            <person name="Shrivastava S."/>
            <person name="Kothari S."/>
            <person name="Dodson R.J."/>
            <person name="Mohamoud Y."/>
            <person name="Khouri H."/>
            <person name="Roesch L.F.W."/>
            <person name="Krogfelt K.A."/>
            <person name="Struve C."/>
            <person name="Triplett E.W."/>
            <person name="Methe B.A."/>
        </authorList>
    </citation>
    <scope>NUCLEOTIDE SEQUENCE [LARGE SCALE GENOMIC DNA]</scope>
    <source>
        <strain>342</strain>
    </source>
</reference>
<evidence type="ECO:0000255" key="1">
    <source>
        <dbReference type="HAMAP-Rule" id="MF_01619"/>
    </source>
</evidence>
<feature type="chain" id="PRO_1000186000" description="NAD-dependent malic enzyme">
    <location>
        <begin position="1"/>
        <end position="565"/>
    </location>
</feature>
<feature type="active site" description="Proton donor" evidence="1">
    <location>
        <position position="104"/>
    </location>
</feature>
<feature type="active site" description="Proton acceptor" evidence="1">
    <location>
        <position position="175"/>
    </location>
</feature>
<feature type="binding site" evidence="1">
    <location>
        <position position="157"/>
    </location>
    <ligand>
        <name>NAD(+)</name>
        <dbReference type="ChEBI" id="CHEBI:57540"/>
    </ligand>
</feature>
<feature type="binding site" evidence="1">
    <location>
        <position position="246"/>
    </location>
    <ligand>
        <name>a divalent metal cation</name>
        <dbReference type="ChEBI" id="CHEBI:60240"/>
    </ligand>
</feature>
<feature type="binding site" evidence="1">
    <location>
        <position position="247"/>
    </location>
    <ligand>
        <name>a divalent metal cation</name>
        <dbReference type="ChEBI" id="CHEBI:60240"/>
    </ligand>
</feature>
<feature type="binding site" evidence="1">
    <location>
        <position position="270"/>
    </location>
    <ligand>
        <name>a divalent metal cation</name>
        <dbReference type="ChEBI" id="CHEBI:60240"/>
    </ligand>
</feature>
<feature type="binding site" evidence="1">
    <location>
        <position position="270"/>
    </location>
    <ligand>
        <name>NAD(+)</name>
        <dbReference type="ChEBI" id="CHEBI:57540"/>
    </ligand>
</feature>
<feature type="binding site" evidence="1">
    <location>
        <position position="418"/>
    </location>
    <ligand>
        <name>NAD(+)</name>
        <dbReference type="ChEBI" id="CHEBI:57540"/>
    </ligand>
</feature>
<feature type="site" description="Important for activity" evidence="1">
    <location>
        <position position="270"/>
    </location>
</feature>
<gene>
    <name evidence="1" type="primary">maeA</name>
    <name type="ordered locus">KPK_2508</name>
</gene>